<protein>
    <recommendedName>
        <fullName>Cytotoxin 6</fullName>
    </recommendedName>
    <alternativeName>
        <fullName>Cardiotoxin-6</fullName>
        <shortName>CTX6</shortName>
    </alternativeName>
</protein>
<accession>Q98965</accession>
<feature type="signal peptide" evidence="1">
    <location>
        <begin position="1"/>
        <end position="21"/>
    </location>
</feature>
<feature type="chain" id="PRO_0000035381" description="Cytotoxin 6">
    <location>
        <begin position="22"/>
        <end position="82"/>
    </location>
</feature>
<feature type="disulfide bond" evidence="2">
    <location>
        <begin position="24"/>
        <end position="42"/>
    </location>
</feature>
<feature type="disulfide bond" evidence="2">
    <location>
        <begin position="35"/>
        <end position="59"/>
    </location>
</feature>
<feature type="disulfide bond" evidence="2">
    <location>
        <begin position="63"/>
        <end position="74"/>
    </location>
</feature>
<feature type="disulfide bond" evidence="2">
    <location>
        <begin position="75"/>
        <end position="80"/>
    </location>
</feature>
<proteinExistence type="inferred from homology"/>
<evidence type="ECO:0000250" key="1"/>
<evidence type="ECO:0000250" key="2">
    <source>
        <dbReference type="UniProtKB" id="P60301"/>
    </source>
</evidence>
<evidence type="ECO:0000250" key="3">
    <source>
        <dbReference type="UniProtKB" id="P60304"/>
    </source>
</evidence>
<evidence type="ECO:0000305" key="4"/>
<organism>
    <name type="scientific">Naja atra</name>
    <name type="common">Chinese cobra</name>
    <dbReference type="NCBI Taxonomy" id="8656"/>
    <lineage>
        <taxon>Eukaryota</taxon>
        <taxon>Metazoa</taxon>
        <taxon>Chordata</taxon>
        <taxon>Craniata</taxon>
        <taxon>Vertebrata</taxon>
        <taxon>Euteleostomi</taxon>
        <taxon>Lepidosauria</taxon>
        <taxon>Squamata</taxon>
        <taxon>Bifurcata</taxon>
        <taxon>Unidentata</taxon>
        <taxon>Episquamata</taxon>
        <taxon>Toxicofera</taxon>
        <taxon>Serpentes</taxon>
        <taxon>Colubroidea</taxon>
        <taxon>Elapidae</taxon>
        <taxon>Elapinae</taxon>
        <taxon>Naja</taxon>
    </lineage>
</organism>
<reference key="1">
    <citation type="journal article" date="1997" name="Biochem. Mol. Biol. Int.">
        <title>cDNA sequence analysis of cardiotoxin variants from Taiwan cobra.</title>
        <authorList>
            <person name="Chang L.-S."/>
            <person name="Lin J."/>
            <person name="Wu P.-F."/>
        </authorList>
    </citation>
    <scope>NUCLEOTIDE SEQUENCE [MRNA]</scope>
    <source>
        <tissue>Venom gland</tissue>
    </source>
</reference>
<name>3SA6_NAJAT</name>
<keyword id="KW-0123">Cardiotoxin</keyword>
<keyword id="KW-0204">Cytolysis</keyword>
<keyword id="KW-1015">Disulfide bond</keyword>
<keyword id="KW-0472">Membrane</keyword>
<keyword id="KW-0964">Secreted</keyword>
<keyword id="KW-0732">Signal</keyword>
<keyword id="KW-1052">Target cell membrane</keyword>
<keyword id="KW-1053">Target membrane</keyword>
<keyword id="KW-0800">Toxin</keyword>
<dbReference type="EMBL" id="Y08727">
    <property type="protein sequence ID" value="CAA69977.1"/>
    <property type="molecule type" value="mRNA"/>
</dbReference>
<dbReference type="SMR" id="Q98965"/>
<dbReference type="GO" id="GO:0005576">
    <property type="term" value="C:extracellular region"/>
    <property type="evidence" value="ECO:0007669"/>
    <property type="project" value="UniProtKB-SubCell"/>
</dbReference>
<dbReference type="GO" id="GO:0016020">
    <property type="term" value="C:membrane"/>
    <property type="evidence" value="ECO:0007669"/>
    <property type="project" value="UniProtKB-KW"/>
</dbReference>
<dbReference type="GO" id="GO:0044218">
    <property type="term" value="C:other organism cell membrane"/>
    <property type="evidence" value="ECO:0007669"/>
    <property type="project" value="UniProtKB-KW"/>
</dbReference>
<dbReference type="GO" id="GO:0090729">
    <property type="term" value="F:toxin activity"/>
    <property type="evidence" value="ECO:0007669"/>
    <property type="project" value="UniProtKB-KW"/>
</dbReference>
<dbReference type="GO" id="GO:0031640">
    <property type="term" value="P:killing of cells of another organism"/>
    <property type="evidence" value="ECO:0007669"/>
    <property type="project" value="UniProtKB-KW"/>
</dbReference>
<dbReference type="CDD" id="cd00206">
    <property type="entry name" value="TFP_snake_toxin"/>
    <property type="match status" value="1"/>
</dbReference>
<dbReference type="FunFam" id="2.10.60.10:FF:000024">
    <property type="entry name" value="Cytotoxin 1"/>
    <property type="match status" value="1"/>
</dbReference>
<dbReference type="Gene3D" id="2.10.60.10">
    <property type="entry name" value="CD59"/>
    <property type="match status" value="1"/>
</dbReference>
<dbReference type="InterPro" id="IPR003572">
    <property type="entry name" value="Cytotoxin_Cobra"/>
</dbReference>
<dbReference type="InterPro" id="IPR003571">
    <property type="entry name" value="Snake_3FTx"/>
</dbReference>
<dbReference type="InterPro" id="IPR045860">
    <property type="entry name" value="Snake_toxin-like_sf"/>
</dbReference>
<dbReference type="InterPro" id="IPR018354">
    <property type="entry name" value="Snake_toxin_con_site"/>
</dbReference>
<dbReference type="InterPro" id="IPR054131">
    <property type="entry name" value="Toxin_cobra-type"/>
</dbReference>
<dbReference type="Pfam" id="PF21947">
    <property type="entry name" value="Toxin_cobra-type"/>
    <property type="match status" value="1"/>
</dbReference>
<dbReference type="PRINTS" id="PR00282">
    <property type="entry name" value="CYTOTOXIN"/>
</dbReference>
<dbReference type="SUPFAM" id="SSF57302">
    <property type="entry name" value="Snake toxin-like"/>
    <property type="match status" value="1"/>
</dbReference>
<dbReference type="PROSITE" id="PS00272">
    <property type="entry name" value="SNAKE_TOXIN"/>
    <property type="match status" value="1"/>
</dbReference>
<comment type="function">
    <text evidence="2 3">Shows cytolytic activity on many different cells by forming pore in lipid membranes. In vivo, increases heart rate or kills the animal by cardiac arrest. In addition, it binds to heparin with high affinity, interacts with Kv channel-interacting protein 1 (KCNIP1) in a calcium-independent manner, and binds to integrin alpha-V/beta-3 (ITGAV/ITGB3) with moderate affinity.</text>
</comment>
<comment type="subunit">
    <text evidence="2">Monomer in solution; Homodimer and oligomer in the presence of negatively charged lipids forming a pore with a size ranging between 20 and 30 Angstroms.</text>
</comment>
<comment type="subcellular location">
    <subcellularLocation>
        <location evidence="1">Secreted</location>
    </subcellularLocation>
    <subcellularLocation>
        <location evidence="2">Target cell membrane</location>
    </subcellularLocation>
</comment>
<comment type="tissue specificity">
    <text evidence="4">Expressed by the venom gland.</text>
</comment>
<comment type="similarity">
    <text evidence="4">Belongs to the three-finger toxin family. Short-chain subfamily. Type IA cytotoxin sub-subfamily.</text>
</comment>
<sequence>MKTLLLTLVVVTIVCLDLGYTLKCNQLIPPFYKTCAAGKNLCYKMFMVAAQRFPVKRGCIDVCPKSSLLVKYVCCNTDRCNN</sequence>